<accession>Q5WHG9</accession>
<feature type="chain" id="PRO_0000167918" description="Small ribosomal subunit protein bS20">
    <location>
        <begin position="1"/>
        <end position="88"/>
    </location>
</feature>
<feature type="region of interest" description="Disordered" evidence="2">
    <location>
        <begin position="1"/>
        <end position="22"/>
    </location>
</feature>
<feature type="region of interest" description="Disordered" evidence="2">
    <location>
        <begin position="69"/>
        <end position="88"/>
    </location>
</feature>
<reference key="1">
    <citation type="submission" date="2003-10" db="EMBL/GenBank/DDBJ databases">
        <title>The complete genome sequence of the alkaliphilic Bacillus clausii KSM-K16.</title>
        <authorList>
            <person name="Takaki Y."/>
            <person name="Kageyama Y."/>
            <person name="Shimamura S."/>
            <person name="Suzuki H."/>
            <person name="Nishi S."/>
            <person name="Hatada Y."/>
            <person name="Kawai S."/>
            <person name="Ito S."/>
            <person name="Horikoshi K."/>
        </authorList>
    </citation>
    <scope>NUCLEOTIDE SEQUENCE [LARGE SCALE GENOMIC DNA]</scope>
    <source>
        <strain>KSM-K16</strain>
    </source>
</reference>
<comment type="function">
    <text evidence="1">Binds directly to 16S ribosomal RNA.</text>
</comment>
<comment type="similarity">
    <text evidence="1">Belongs to the bacterial ribosomal protein bS20 family.</text>
</comment>
<gene>
    <name evidence="1" type="primary">rpsT</name>
    <name type="ordered locus">ABC1651</name>
</gene>
<name>RS20_SHOC1</name>
<sequence length="88" mass="9482">MPNIKSAIKRVKTNEKRRAQNAAQKSALRTAVKHFETAAANGDVEKAQAAFVEASKKLDKAATKGLIHKNAASRQKSRLAKKLNGLSA</sequence>
<organism>
    <name type="scientific">Shouchella clausii (strain KSM-K16)</name>
    <name type="common">Alkalihalobacillus clausii</name>
    <dbReference type="NCBI Taxonomy" id="66692"/>
    <lineage>
        <taxon>Bacteria</taxon>
        <taxon>Bacillati</taxon>
        <taxon>Bacillota</taxon>
        <taxon>Bacilli</taxon>
        <taxon>Bacillales</taxon>
        <taxon>Bacillaceae</taxon>
        <taxon>Shouchella</taxon>
    </lineage>
</organism>
<evidence type="ECO:0000255" key="1">
    <source>
        <dbReference type="HAMAP-Rule" id="MF_00500"/>
    </source>
</evidence>
<evidence type="ECO:0000256" key="2">
    <source>
        <dbReference type="SAM" id="MobiDB-lite"/>
    </source>
</evidence>
<evidence type="ECO:0000305" key="3"/>
<proteinExistence type="inferred from homology"/>
<dbReference type="EMBL" id="AP006627">
    <property type="protein sequence ID" value="BAD64186.1"/>
    <property type="molecule type" value="Genomic_DNA"/>
</dbReference>
<dbReference type="RefSeq" id="WP_011246495.1">
    <property type="nucleotide sequence ID" value="NC_006582.1"/>
</dbReference>
<dbReference type="SMR" id="Q5WHG9"/>
<dbReference type="STRING" id="66692.ABC1651"/>
<dbReference type="GeneID" id="86925740"/>
<dbReference type="KEGG" id="bcl:ABC1651"/>
<dbReference type="eggNOG" id="COG0268">
    <property type="taxonomic scope" value="Bacteria"/>
</dbReference>
<dbReference type="HOGENOM" id="CLU_160655_1_0_9"/>
<dbReference type="OrthoDB" id="9808392at2"/>
<dbReference type="Proteomes" id="UP000001168">
    <property type="component" value="Chromosome"/>
</dbReference>
<dbReference type="GO" id="GO:0005829">
    <property type="term" value="C:cytosol"/>
    <property type="evidence" value="ECO:0007669"/>
    <property type="project" value="TreeGrafter"/>
</dbReference>
<dbReference type="GO" id="GO:0015935">
    <property type="term" value="C:small ribosomal subunit"/>
    <property type="evidence" value="ECO:0007669"/>
    <property type="project" value="TreeGrafter"/>
</dbReference>
<dbReference type="GO" id="GO:0070181">
    <property type="term" value="F:small ribosomal subunit rRNA binding"/>
    <property type="evidence" value="ECO:0007669"/>
    <property type="project" value="TreeGrafter"/>
</dbReference>
<dbReference type="GO" id="GO:0003735">
    <property type="term" value="F:structural constituent of ribosome"/>
    <property type="evidence" value="ECO:0007669"/>
    <property type="project" value="InterPro"/>
</dbReference>
<dbReference type="GO" id="GO:0006412">
    <property type="term" value="P:translation"/>
    <property type="evidence" value="ECO:0007669"/>
    <property type="project" value="UniProtKB-UniRule"/>
</dbReference>
<dbReference type="FunFam" id="1.20.58.110:FF:000001">
    <property type="entry name" value="30S ribosomal protein S20"/>
    <property type="match status" value="1"/>
</dbReference>
<dbReference type="Gene3D" id="1.20.58.110">
    <property type="entry name" value="Ribosomal protein S20"/>
    <property type="match status" value="1"/>
</dbReference>
<dbReference type="HAMAP" id="MF_00500">
    <property type="entry name" value="Ribosomal_bS20"/>
    <property type="match status" value="1"/>
</dbReference>
<dbReference type="InterPro" id="IPR002583">
    <property type="entry name" value="Ribosomal_bS20"/>
</dbReference>
<dbReference type="InterPro" id="IPR036510">
    <property type="entry name" value="Ribosomal_bS20_sf"/>
</dbReference>
<dbReference type="NCBIfam" id="TIGR00029">
    <property type="entry name" value="S20"/>
    <property type="match status" value="1"/>
</dbReference>
<dbReference type="PANTHER" id="PTHR33398">
    <property type="entry name" value="30S RIBOSOMAL PROTEIN S20"/>
    <property type="match status" value="1"/>
</dbReference>
<dbReference type="PANTHER" id="PTHR33398:SF1">
    <property type="entry name" value="SMALL RIBOSOMAL SUBUNIT PROTEIN BS20C"/>
    <property type="match status" value="1"/>
</dbReference>
<dbReference type="Pfam" id="PF01649">
    <property type="entry name" value="Ribosomal_S20p"/>
    <property type="match status" value="1"/>
</dbReference>
<dbReference type="SUPFAM" id="SSF46992">
    <property type="entry name" value="Ribosomal protein S20"/>
    <property type="match status" value="1"/>
</dbReference>
<protein>
    <recommendedName>
        <fullName evidence="1">Small ribosomal subunit protein bS20</fullName>
    </recommendedName>
    <alternativeName>
        <fullName evidence="3">30S ribosomal protein S20</fullName>
    </alternativeName>
</protein>
<keyword id="KW-1185">Reference proteome</keyword>
<keyword id="KW-0687">Ribonucleoprotein</keyword>
<keyword id="KW-0689">Ribosomal protein</keyword>
<keyword id="KW-0694">RNA-binding</keyword>
<keyword id="KW-0699">rRNA-binding</keyword>